<evidence type="ECO:0000250" key="1"/>
<evidence type="ECO:0000255" key="2"/>
<evidence type="ECO:0000255" key="3">
    <source>
        <dbReference type="PROSITE-ProRule" id="PRU00077"/>
    </source>
</evidence>
<evidence type="ECO:0000255" key="4">
    <source>
        <dbReference type="PROSITE-ProRule" id="PRU00448"/>
    </source>
</evidence>
<evidence type="ECO:0000305" key="5"/>
<feature type="chain" id="PRO_0000349442" description="Actin cytoskeleton-regulatory complex protein end3">
    <location>
        <begin position="1"/>
        <end position="404"/>
    </location>
</feature>
<feature type="domain" description="EH 1" evidence="3">
    <location>
        <begin position="10"/>
        <end position="100"/>
    </location>
</feature>
<feature type="domain" description="EF-hand" evidence="4">
    <location>
        <begin position="42"/>
        <end position="77"/>
    </location>
</feature>
<feature type="domain" description="EH 2" evidence="3">
    <location>
        <begin position="139"/>
        <end position="227"/>
    </location>
</feature>
<feature type="coiled-coil region" evidence="2">
    <location>
        <begin position="290"/>
        <end position="403"/>
    </location>
</feature>
<feature type="binding site" evidence="4">
    <location>
        <position position="55"/>
    </location>
    <ligand>
        <name>Ca(2+)</name>
        <dbReference type="ChEBI" id="CHEBI:29108"/>
    </ligand>
</feature>
<feature type="binding site" evidence="4">
    <location>
        <position position="57"/>
    </location>
    <ligand>
        <name>Ca(2+)</name>
        <dbReference type="ChEBI" id="CHEBI:29108"/>
    </ligand>
</feature>
<feature type="binding site" evidence="4">
    <location>
        <position position="59"/>
    </location>
    <ligand>
        <name>Ca(2+)</name>
        <dbReference type="ChEBI" id="CHEBI:29108"/>
    </ligand>
</feature>
<feature type="binding site" evidence="4">
    <location>
        <position position="61"/>
    </location>
    <ligand>
        <name>Ca(2+)</name>
        <dbReference type="ChEBI" id="CHEBI:29108"/>
    </ligand>
</feature>
<feature type="binding site" evidence="4">
    <location>
        <position position="66"/>
    </location>
    <ligand>
        <name>Ca(2+)</name>
        <dbReference type="ChEBI" id="CHEBI:29108"/>
    </ligand>
</feature>
<comment type="function">
    <text evidence="1">Component of the PAN1 actin cytoskeleton-regulatory complex required for the internalization of endosomes during actin-coupled endocytosis. The complex links the site of endocytosis to the cell membrane-associated actin cytoskeleton. Mediates uptake of external molecules and vacuolar degradation of plasma membrane proteins. Plays a role in the proper organization of the cell membrane-associated actin cytoskeleton and promotes its destabilization (By similarity).</text>
</comment>
<comment type="subunit">
    <text evidence="1">Component of the PAN1 actin cytoskeleton-regulatory complex.</text>
</comment>
<comment type="subcellular location">
    <subcellularLocation>
        <location evidence="1">Cell membrane</location>
        <topology evidence="1">Peripheral membrane protein</topology>
        <orientation evidence="1">Cytoplasmic side</orientation>
    </subcellularLocation>
    <subcellularLocation>
        <location evidence="1">Endosome membrane</location>
        <topology evidence="1">Peripheral membrane protein</topology>
        <orientation evidence="1">Cytoplasmic side</orientation>
    </subcellularLocation>
    <subcellularLocation>
        <location evidence="1">Cytoplasm</location>
        <location evidence="1">Cytoskeleton</location>
        <location evidence="1">Actin patch</location>
    </subcellularLocation>
    <text evidence="1">Cytoplasmic and cortical actin patches.</text>
</comment>
<comment type="similarity">
    <text evidence="5">Belongs to the END3 family.</text>
</comment>
<name>END3_BOTFB</name>
<dbReference type="EMBL" id="CP009811">
    <property type="protein sequence ID" value="ATZ51793.1"/>
    <property type="molecule type" value="Genomic_DNA"/>
</dbReference>
<dbReference type="EnsemblFungi" id="Bcin07g03670.1">
    <property type="protein sequence ID" value="Bcin07p03670.1"/>
    <property type="gene ID" value="Bcin07g03670"/>
</dbReference>
<dbReference type="GeneID" id="5429436"/>
<dbReference type="KEGG" id="bfu:BCIN_07g03670"/>
<dbReference type="VEuPathDB" id="FungiDB:Bcin07g03670"/>
<dbReference type="OMA" id="DWLIPES"/>
<dbReference type="OrthoDB" id="1716625at2759"/>
<dbReference type="Proteomes" id="UP000001798">
    <property type="component" value="Chromosome bcin07"/>
</dbReference>
<dbReference type="GO" id="GO:0030479">
    <property type="term" value="C:actin cortical patch"/>
    <property type="evidence" value="ECO:0007669"/>
    <property type="project" value="UniProtKB-SubCell"/>
</dbReference>
<dbReference type="GO" id="GO:0010008">
    <property type="term" value="C:endosome membrane"/>
    <property type="evidence" value="ECO:0007669"/>
    <property type="project" value="UniProtKB-SubCell"/>
</dbReference>
<dbReference type="GO" id="GO:0005886">
    <property type="term" value="C:plasma membrane"/>
    <property type="evidence" value="ECO:0007669"/>
    <property type="project" value="UniProtKB-SubCell"/>
</dbReference>
<dbReference type="GO" id="GO:0003779">
    <property type="term" value="F:actin binding"/>
    <property type="evidence" value="ECO:0007669"/>
    <property type="project" value="UniProtKB-KW"/>
</dbReference>
<dbReference type="GO" id="GO:0005509">
    <property type="term" value="F:calcium ion binding"/>
    <property type="evidence" value="ECO:0007669"/>
    <property type="project" value="InterPro"/>
</dbReference>
<dbReference type="GO" id="GO:0007015">
    <property type="term" value="P:actin filament organization"/>
    <property type="evidence" value="ECO:0007669"/>
    <property type="project" value="InterPro"/>
</dbReference>
<dbReference type="GO" id="GO:0006897">
    <property type="term" value="P:endocytosis"/>
    <property type="evidence" value="ECO:0007669"/>
    <property type="project" value="UniProtKB-KW"/>
</dbReference>
<dbReference type="GO" id="GO:0016197">
    <property type="term" value="P:endosomal transport"/>
    <property type="evidence" value="ECO:0007669"/>
    <property type="project" value="TreeGrafter"/>
</dbReference>
<dbReference type="CDD" id="cd00052">
    <property type="entry name" value="EH"/>
    <property type="match status" value="1"/>
</dbReference>
<dbReference type="FunFam" id="1.10.238.10:FF:000339">
    <property type="entry name" value="Actin cytoskeleton-regulatory complex protein END3"/>
    <property type="match status" value="1"/>
</dbReference>
<dbReference type="Gene3D" id="1.10.238.10">
    <property type="entry name" value="EF-hand"/>
    <property type="match status" value="2"/>
</dbReference>
<dbReference type="InterPro" id="IPR011992">
    <property type="entry name" value="EF-hand-dom_pair"/>
</dbReference>
<dbReference type="InterPro" id="IPR018247">
    <property type="entry name" value="EF_Hand_1_Ca_BS"/>
</dbReference>
<dbReference type="InterPro" id="IPR002048">
    <property type="entry name" value="EF_hand_dom"/>
</dbReference>
<dbReference type="InterPro" id="IPR000261">
    <property type="entry name" value="EH_dom"/>
</dbReference>
<dbReference type="InterPro" id="IPR025604">
    <property type="entry name" value="End3"/>
</dbReference>
<dbReference type="PANTHER" id="PTHR11216">
    <property type="entry name" value="EH DOMAIN"/>
    <property type="match status" value="1"/>
</dbReference>
<dbReference type="Pfam" id="PF12763">
    <property type="entry name" value="EH"/>
    <property type="match status" value="1"/>
</dbReference>
<dbReference type="Pfam" id="PF12761">
    <property type="entry name" value="End3"/>
    <property type="match status" value="1"/>
</dbReference>
<dbReference type="SMART" id="SM00054">
    <property type="entry name" value="EFh"/>
    <property type="match status" value="1"/>
</dbReference>
<dbReference type="SMART" id="SM00027">
    <property type="entry name" value="EH"/>
    <property type="match status" value="2"/>
</dbReference>
<dbReference type="SUPFAM" id="SSF47473">
    <property type="entry name" value="EF-hand"/>
    <property type="match status" value="2"/>
</dbReference>
<dbReference type="PROSITE" id="PS00018">
    <property type="entry name" value="EF_HAND_1"/>
    <property type="match status" value="1"/>
</dbReference>
<dbReference type="PROSITE" id="PS50222">
    <property type="entry name" value="EF_HAND_2"/>
    <property type="match status" value="1"/>
</dbReference>
<dbReference type="PROSITE" id="PS50031">
    <property type="entry name" value="EH"/>
    <property type="match status" value="2"/>
</dbReference>
<reference key="1">
    <citation type="journal article" date="2011" name="PLoS Genet.">
        <title>Genomic analysis of the necrotrophic fungal pathogens Sclerotinia sclerotiorum and Botrytis cinerea.</title>
        <authorList>
            <person name="Amselem J."/>
            <person name="Cuomo C.A."/>
            <person name="van Kan J.A.L."/>
            <person name="Viaud M."/>
            <person name="Benito E.P."/>
            <person name="Couloux A."/>
            <person name="Coutinho P.M."/>
            <person name="de Vries R.P."/>
            <person name="Dyer P.S."/>
            <person name="Fillinger S."/>
            <person name="Fournier E."/>
            <person name="Gout L."/>
            <person name="Hahn M."/>
            <person name="Kohn L."/>
            <person name="Lapalu N."/>
            <person name="Plummer K.M."/>
            <person name="Pradier J.-M."/>
            <person name="Quevillon E."/>
            <person name="Sharon A."/>
            <person name="Simon A."/>
            <person name="ten Have A."/>
            <person name="Tudzynski B."/>
            <person name="Tudzynski P."/>
            <person name="Wincker P."/>
            <person name="Andrew M."/>
            <person name="Anthouard V."/>
            <person name="Beever R.E."/>
            <person name="Beffa R."/>
            <person name="Benoit I."/>
            <person name="Bouzid O."/>
            <person name="Brault B."/>
            <person name="Chen Z."/>
            <person name="Choquer M."/>
            <person name="Collemare J."/>
            <person name="Cotton P."/>
            <person name="Danchin E.G."/>
            <person name="Da Silva C."/>
            <person name="Gautier A."/>
            <person name="Giraud C."/>
            <person name="Giraud T."/>
            <person name="Gonzalez C."/>
            <person name="Grossetete S."/>
            <person name="Gueldener U."/>
            <person name="Henrissat B."/>
            <person name="Howlett B.J."/>
            <person name="Kodira C."/>
            <person name="Kretschmer M."/>
            <person name="Lappartient A."/>
            <person name="Leroch M."/>
            <person name="Levis C."/>
            <person name="Mauceli E."/>
            <person name="Neuveglise C."/>
            <person name="Oeser B."/>
            <person name="Pearson M."/>
            <person name="Poulain J."/>
            <person name="Poussereau N."/>
            <person name="Quesneville H."/>
            <person name="Rascle C."/>
            <person name="Schumacher J."/>
            <person name="Segurens B."/>
            <person name="Sexton A."/>
            <person name="Silva E."/>
            <person name="Sirven C."/>
            <person name="Soanes D.M."/>
            <person name="Talbot N.J."/>
            <person name="Templeton M."/>
            <person name="Yandava C."/>
            <person name="Yarden O."/>
            <person name="Zeng Q."/>
            <person name="Rollins J.A."/>
            <person name="Lebrun M.-H."/>
            <person name="Dickman M."/>
        </authorList>
    </citation>
    <scope>NUCLEOTIDE SEQUENCE [LARGE SCALE GENOMIC DNA]</scope>
    <source>
        <strain>B05.10</strain>
    </source>
</reference>
<reference key="2">
    <citation type="journal article" date="2012" name="Eukaryot. Cell">
        <title>Genome update of Botrytis cinerea strains B05.10 and T4.</title>
        <authorList>
            <person name="Staats M."/>
            <person name="van Kan J.A.L."/>
        </authorList>
    </citation>
    <scope>NUCLEOTIDE SEQUENCE [LARGE SCALE GENOMIC DNA]</scope>
    <scope>GENOME REANNOTATION</scope>
    <source>
        <strain>B05.10</strain>
    </source>
</reference>
<reference key="3">
    <citation type="journal article" date="2017" name="Mol. Plant Pathol.">
        <title>A gapless genome sequence of the fungus Botrytis cinerea.</title>
        <authorList>
            <person name="van Kan J.A.L."/>
            <person name="Stassen J.H.M."/>
            <person name="Mosbach A."/>
            <person name="van der Lee T.A.J."/>
            <person name="Faino L."/>
            <person name="Farmer A.D."/>
            <person name="Papasotiriou D.G."/>
            <person name="Zhou S."/>
            <person name="Seidl M.F."/>
            <person name="Cottam E."/>
            <person name="Edel D."/>
            <person name="Hahn M."/>
            <person name="Schwartz D.C."/>
            <person name="Dietrich R.A."/>
            <person name="Widdison S."/>
            <person name="Scalliet G."/>
        </authorList>
    </citation>
    <scope>NUCLEOTIDE SEQUENCE [LARGE SCALE GENOMIC DNA]</scope>
    <scope>GENOME REANNOTATION</scope>
    <source>
        <strain>B05.10</strain>
    </source>
</reference>
<protein>
    <recommendedName>
        <fullName>Actin cytoskeleton-regulatory complex protein end3</fullName>
    </recommendedName>
    <alternativeName>
        <fullName>Endocytosis protein 3</fullName>
    </alternativeName>
</protein>
<gene>
    <name type="primary">end3</name>
    <name type="ORF">BC1G_12578</name>
    <name type="ORF">BCIN_07g03670</name>
</gene>
<keyword id="KW-0009">Actin-binding</keyword>
<keyword id="KW-0106">Calcium</keyword>
<keyword id="KW-1003">Cell membrane</keyword>
<keyword id="KW-0175">Coiled coil</keyword>
<keyword id="KW-0963">Cytoplasm</keyword>
<keyword id="KW-0206">Cytoskeleton</keyword>
<keyword id="KW-0254">Endocytosis</keyword>
<keyword id="KW-0967">Endosome</keyword>
<keyword id="KW-0472">Membrane</keyword>
<keyword id="KW-0479">Metal-binding</keyword>
<keyword id="KW-1185">Reference proteome</keyword>
<keyword id="KW-0677">Repeat</keyword>
<proteinExistence type="inferred from homology"/>
<accession>A6SIJ6</accession>
<accession>A0A384JMK7</accession>
<sequence length="404" mass="45372">MSNKRIEQSEIEKYWEIFASLSNGGTHLTGAQAAPVLKNSQLRDEQLERIWDLADVDNDGNLDFEEFCVAMRLIFDLVNGEYADVPPALPDWLVPESKAHLVQANRALTGRQVQFERVEDDDDTPGLKDGFDWYMSPSDKSKYEEIYSANRDGRGDITFESLDTLYSSLEVPDTDIRSAWNLINPSAAPAISKDATLAFLHILNNRHEGYRIPRTIPPSLRASFEKNQIDYQVDNQRIASPAQKWGVTGGEETSTGRKAKFGETYMSRLGIGGKSSYRPAGTDFSGTKTTEDWEEVRLKKQLAELEAKLEKVESASAARSGGRRDTKPALVKRELEQLLDYKRRELRDLESGEGKSKIGASLKGVADEIATVKEQVDALEAHLRTREQVLEGLQQEIENEKSSR</sequence>
<organism>
    <name type="scientific">Botryotinia fuckeliana (strain B05.10)</name>
    <name type="common">Noble rot fungus</name>
    <name type="synonym">Botrytis cinerea</name>
    <dbReference type="NCBI Taxonomy" id="332648"/>
    <lineage>
        <taxon>Eukaryota</taxon>
        <taxon>Fungi</taxon>
        <taxon>Dikarya</taxon>
        <taxon>Ascomycota</taxon>
        <taxon>Pezizomycotina</taxon>
        <taxon>Leotiomycetes</taxon>
        <taxon>Helotiales</taxon>
        <taxon>Sclerotiniaceae</taxon>
        <taxon>Botrytis</taxon>
    </lineage>
</organism>